<sequence length="152" mass="17300">MANLERTFIAIKPDGVQRGLVGEIIKRFEQKGFRLVAMKFLRASEEHLKQHYTDLKDRPFFPGLVKYMNSGPVVAMVWEGLNVVKTGRLMLGETNPADSKPGTIRGDFCIQVGRNIIHGSDSVKSAEKEISLWFKPEELVDYKSCAHDWVYE</sequence>
<keyword id="KW-0067">ATP-binding</keyword>
<keyword id="KW-0966">Cell projection</keyword>
<keyword id="KW-0963">Cytoplasm</keyword>
<keyword id="KW-0238">DNA-binding</keyword>
<keyword id="KW-0418">Kinase</keyword>
<keyword id="KW-0460">Magnesium</keyword>
<keyword id="KW-0479">Metal-binding</keyword>
<keyword id="KW-0546">Nucleotide metabolism</keyword>
<keyword id="KW-0547">Nucleotide-binding</keyword>
<keyword id="KW-0539">Nucleus</keyword>
<keyword id="KW-1185">Reference proteome</keyword>
<keyword id="KW-0804">Transcription</keyword>
<keyword id="KW-0805">Transcription regulation</keyword>
<keyword id="KW-0808">Transferase</keyword>
<feature type="chain" id="PRO_0000250202" description="Nucleoside diphosphate kinase B">
    <location>
        <begin position="1"/>
        <end position="152"/>
    </location>
</feature>
<feature type="region of interest" description="Interaction with AKAP13" evidence="1">
    <location>
        <begin position="1"/>
        <end position="66"/>
    </location>
</feature>
<feature type="active site" description="Pros-phosphohistidine intermediate" evidence="1">
    <location>
        <position position="118"/>
    </location>
</feature>
<feature type="binding site" evidence="1">
    <location>
        <position position="12"/>
    </location>
    <ligand>
        <name>ATP</name>
        <dbReference type="ChEBI" id="CHEBI:30616"/>
    </ligand>
</feature>
<feature type="binding site" evidence="1">
    <location>
        <position position="60"/>
    </location>
    <ligand>
        <name>ATP</name>
        <dbReference type="ChEBI" id="CHEBI:30616"/>
    </ligand>
</feature>
<feature type="binding site" evidence="1">
    <location>
        <position position="88"/>
    </location>
    <ligand>
        <name>ATP</name>
        <dbReference type="ChEBI" id="CHEBI:30616"/>
    </ligand>
</feature>
<feature type="binding site" evidence="1">
    <location>
        <position position="94"/>
    </location>
    <ligand>
        <name>ATP</name>
        <dbReference type="ChEBI" id="CHEBI:30616"/>
    </ligand>
</feature>
<feature type="binding site" evidence="1">
    <location>
        <position position="105"/>
    </location>
    <ligand>
        <name>ATP</name>
        <dbReference type="ChEBI" id="CHEBI:30616"/>
    </ligand>
</feature>
<feature type="binding site" evidence="1">
    <location>
        <position position="115"/>
    </location>
    <ligand>
        <name>ATP</name>
        <dbReference type="ChEBI" id="CHEBI:30616"/>
    </ligand>
</feature>
<organism>
    <name type="scientific">Pongo abelii</name>
    <name type="common">Sumatran orangutan</name>
    <name type="synonym">Pongo pygmaeus abelii</name>
    <dbReference type="NCBI Taxonomy" id="9601"/>
    <lineage>
        <taxon>Eukaryota</taxon>
        <taxon>Metazoa</taxon>
        <taxon>Chordata</taxon>
        <taxon>Craniata</taxon>
        <taxon>Vertebrata</taxon>
        <taxon>Euteleostomi</taxon>
        <taxon>Mammalia</taxon>
        <taxon>Eutheria</taxon>
        <taxon>Euarchontoglires</taxon>
        <taxon>Primates</taxon>
        <taxon>Haplorrhini</taxon>
        <taxon>Catarrhini</taxon>
        <taxon>Hominidae</taxon>
        <taxon>Pongo</taxon>
    </lineage>
</organism>
<evidence type="ECO:0000250" key="1">
    <source>
        <dbReference type="UniProtKB" id="P22392"/>
    </source>
</evidence>
<evidence type="ECO:0000250" key="2">
    <source>
        <dbReference type="UniProtKB" id="P36010"/>
    </source>
</evidence>
<evidence type="ECO:0000250" key="3">
    <source>
        <dbReference type="UniProtKB" id="Q01768"/>
    </source>
</evidence>
<evidence type="ECO:0000305" key="4"/>
<reference key="1">
    <citation type="submission" date="2004-11" db="EMBL/GenBank/DDBJ databases">
        <authorList>
            <consortium name="The German cDNA consortium"/>
        </authorList>
    </citation>
    <scope>NUCLEOTIDE SEQUENCE [LARGE SCALE MRNA]</scope>
    <source>
        <tissue>Heart</tissue>
    </source>
</reference>
<dbReference type="EC" id="2.7.4.6" evidence="1"/>
<dbReference type="EC" id="2.7.13.3" evidence="1"/>
<dbReference type="EMBL" id="CR857184">
    <property type="protein sequence ID" value="CAH89484.1"/>
    <property type="molecule type" value="mRNA"/>
</dbReference>
<dbReference type="RefSeq" id="NP_001127154.1">
    <property type="nucleotide sequence ID" value="NM_001133682.2"/>
</dbReference>
<dbReference type="RefSeq" id="XP_024090036.1">
    <property type="nucleotide sequence ID" value="XM_024234268.3"/>
</dbReference>
<dbReference type="RefSeq" id="XP_024090037.1">
    <property type="nucleotide sequence ID" value="XM_024234269.3"/>
</dbReference>
<dbReference type="SMR" id="Q5RFH3"/>
<dbReference type="FunCoup" id="Q5RFH3">
    <property type="interactions" value="1847"/>
</dbReference>
<dbReference type="STRING" id="9601.ENSPPYP00000005726"/>
<dbReference type="Ensembl" id="ENSPPYT00000034878.1">
    <property type="protein sequence ID" value="ENSPPYP00000032294.1"/>
    <property type="gene ID" value="ENSPPYG00000035680.1"/>
</dbReference>
<dbReference type="GeneID" id="100174205"/>
<dbReference type="KEGG" id="pon:100174205"/>
<dbReference type="CTD" id="4831"/>
<dbReference type="eggNOG" id="KOG0888">
    <property type="taxonomic scope" value="Eukaryota"/>
</dbReference>
<dbReference type="GeneTree" id="ENSGT00940000161569"/>
<dbReference type="InParanoid" id="Q5RFH3"/>
<dbReference type="OMA" id="NIWFKAD"/>
<dbReference type="OrthoDB" id="2162449at2759"/>
<dbReference type="Proteomes" id="UP000001595">
    <property type="component" value="Chromosome 17"/>
</dbReference>
<dbReference type="GO" id="GO:0071944">
    <property type="term" value="C:cell periphery"/>
    <property type="evidence" value="ECO:0000250"/>
    <property type="project" value="UniProtKB"/>
</dbReference>
<dbReference type="GO" id="GO:0005737">
    <property type="term" value="C:cytoplasm"/>
    <property type="evidence" value="ECO:0000250"/>
    <property type="project" value="UniProtKB"/>
</dbReference>
<dbReference type="GO" id="GO:0030027">
    <property type="term" value="C:lamellipodium"/>
    <property type="evidence" value="ECO:0000250"/>
    <property type="project" value="UniProtKB"/>
</dbReference>
<dbReference type="GO" id="GO:0005634">
    <property type="term" value="C:nucleus"/>
    <property type="evidence" value="ECO:0007669"/>
    <property type="project" value="UniProtKB-SubCell"/>
</dbReference>
<dbReference type="GO" id="GO:0001726">
    <property type="term" value="C:ruffle"/>
    <property type="evidence" value="ECO:0000250"/>
    <property type="project" value="UniProtKB"/>
</dbReference>
<dbReference type="GO" id="GO:0005524">
    <property type="term" value="F:ATP binding"/>
    <property type="evidence" value="ECO:0007669"/>
    <property type="project" value="UniProtKB-KW"/>
</dbReference>
<dbReference type="GO" id="GO:0003677">
    <property type="term" value="F:DNA binding"/>
    <property type="evidence" value="ECO:0000250"/>
    <property type="project" value="UniProtKB"/>
</dbReference>
<dbReference type="GO" id="GO:0051880">
    <property type="term" value="F:G-quadruplex DNA binding"/>
    <property type="evidence" value="ECO:0000250"/>
    <property type="project" value="UniProtKB"/>
</dbReference>
<dbReference type="GO" id="GO:0019003">
    <property type="term" value="F:GDP binding"/>
    <property type="evidence" value="ECO:0007669"/>
    <property type="project" value="Ensembl"/>
</dbReference>
<dbReference type="GO" id="GO:0042802">
    <property type="term" value="F:identical protein binding"/>
    <property type="evidence" value="ECO:0007669"/>
    <property type="project" value="Ensembl"/>
</dbReference>
<dbReference type="GO" id="GO:0046872">
    <property type="term" value="F:metal ion binding"/>
    <property type="evidence" value="ECO:0007669"/>
    <property type="project" value="UniProtKB-KW"/>
</dbReference>
<dbReference type="GO" id="GO:0004550">
    <property type="term" value="F:nucleoside diphosphate kinase activity"/>
    <property type="evidence" value="ECO:0000250"/>
    <property type="project" value="UniProtKB"/>
</dbReference>
<dbReference type="GO" id="GO:0004673">
    <property type="term" value="F:protein histidine kinase activity"/>
    <property type="evidence" value="ECO:0007669"/>
    <property type="project" value="UniProtKB-EC"/>
</dbReference>
<dbReference type="GO" id="GO:0003713">
    <property type="term" value="F:transcription coactivator activity"/>
    <property type="evidence" value="ECO:0007669"/>
    <property type="project" value="Ensembl"/>
</dbReference>
<dbReference type="GO" id="GO:0006241">
    <property type="term" value="P:CTP biosynthetic process"/>
    <property type="evidence" value="ECO:0007669"/>
    <property type="project" value="InterPro"/>
</dbReference>
<dbReference type="GO" id="GO:0006183">
    <property type="term" value="P:GTP biosynthetic process"/>
    <property type="evidence" value="ECO:0007669"/>
    <property type="project" value="InterPro"/>
</dbReference>
<dbReference type="GO" id="GO:0007229">
    <property type="term" value="P:integrin-mediated signaling pathway"/>
    <property type="evidence" value="ECO:0000250"/>
    <property type="project" value="UniProtKB"/>
</dbReference>
<dbReference type="GO" id="GO:0043066">
    <property type="term" value="P:negative regulation of apoptotic process"/>
    <property type="evidence" value="ECO:0007669"/>
    <property type="project" value="Ensembl"/>
</dbReference>
<dbReference type="GO" id="GO:0009142">
    <property type="term" value="P:nucleoside triphosphate biosynthetic process"/>
    <property type="evidence" value="ECO:0000250"/>
    <property type="project" value="UniProtKB"/>
</dbReference>
<dbReference type="GO" id="GO:0045893">
    <property type="term" value="P:positive regulation of DNA-templated transcription"/>
    <property type="evidence" value="ECO:0000250"/>
    <property type="project" value="UniProtKB"/>
</dbReference>
<dbReference type="GO" id="GO:0050679">
    <property type="term" value="P:positive regulation of epithelial cell proliferation"/>
    <property type="evidence" value="ECO:0007669"/>
    <property type="project" value="Ensembl"/>
</dbReference>
<dbReference type="GO" id="GO:0045618">
    <property type="term" value="P:positive regulation of keratinocyte differentiation"/>
    <property type="evidence" value="ECO:0007669"/>
    <property type="project" value="Ensembl"/>
</dbReference>
<dbReference type="GO" id="GO:0045944">
    <property type="term" value="P:positive regulation of transcription by RNA polymerase II"/>
    <property type="evidence" value="ECO:0000250"/>
    <property type="project" value="UniProtKB"/>
</dbReference>
<dbReference type="GO" id="GO:0006228">
    <property type="term" value="P:UTP biosynthetic process"/>
    <property type="evidence" value="ECO:0007669"/>
    <property type="project" value="InterPro"/>
</dbReference>
<dbReference type="CDD" id="cd04413">
    <property type="entry name" value="NDPk_I"/>
    <property type="match status" value="1"/>
</dbReference>
<dbReference type="FunFam" id="3.30.70.141:FF:000015">
    <property type="entry name" value="Nucleoside diphosphate kinase B"/>
    <property type="match status" value="1"/>
</dbReference>
<dbReference type="Gene3D" id="3.30.70.141">
    <property type="entry name" value="Nucleoside diphosphate kinase-like domain"/>
    <property type="match status" value="1"/>
</dbReference>
<dbReference type="HAMAP" id="MF_00451">
    <property type="entry name" value="NDP_kinase"/>
    <property type="match status" value="1"/>
</dbReference>
<dbReference type="InterPro" id="IPR034907">
    <property type="entry name" value="NDK-like_dom"/>
</dbReference>
<dbReference type="InterPro" id="IPR036850">
    <property type="entry name" value="NDK-like_dom_sf"/>
</dbReference>
<dbReference type="InterPro" id="IPR001564">
    <property type="entry name" value="Nucleoside_diP_kinase"/>
</dbReference>
<dbReference type="InterPro" id="IPR023005">
    <property type="entry name" value="Nucleoside_diP_kinase_AS"/>
</dbReference>
<dbReference type="NCBIfam" id="NF001908">
    <property type="entry name" value="PRK00668.1"/>
    <property type="match status" value="1"/>
</dbReference>
<dbReference type="PANTHER" id="PTHR11349">
    <property type="entry name" value="NUCLEOSIDE DIPHOSPHATE KINASE"/>
    <property type="match status" value="1"/>
</dbReference>
<dbReference type="Pfam" id="PF00334">
    <property type="entry name" value="NDK"/>
    <property type="match status" value="1"/>
</dbReference>
<dbReference type="PRINTS" id="PR01243">
    <property type="entry name" value="NUCDPKINASE"/>
</dbReference>
<dbReference type="SMART" id="SM00562">
    <property type="entry name" value="NDK"/>
    <property type="match status" value="1"/>
</dbReference>
<dbReference type="SUPFAM" id="SSF54919">
    <property type="entry name" value="Nucleoside diphosphate kinase, NDK"/>
    <property type="match status" value="1"/>
</dbReference>
<dbReference type="PROSITE" id="PS00469">
    <property type="entry name" value="NDPK"/>
    <property type="match status" value="1"/>
</dbReference>
<dbReference type="PROSITE" id="PS51374">
    <property type="entry name" value="NDPK_LIKE"/>
    <property type="match status" value="1"/>
</dbReference>
<gene>
    <name type="primary">NME2</name>
</gene>
<proteinExistence type="evidence at transcript level"/>
<protein>
    <recommendedName>
        <fullName>Nucleoside diphosphate kinase B</fullName>
        <shortName>NDK B</shortName>
        <shortName>NDP kinase B</shortName>
        <ecNumber evidence="1">2.7.4.6</ecNumber>
    </recommendedName>
    <alternativeName>
        <fullName>Histidine protein kinase NDKB</fullName>
        <ecNumber evidence="1">2.7.13.3</ecNumber>
    </alternativeName>
</protein>
<comment type="function">
    <text evidence="1 2">Major role in the synthesis of nucleoside triphosphates other than ATP. The ATP gamma phosphate is transferred to the NDP beta phosphate via a ping-pong mechanism, using a phosphorylated active-site intermediate (By similarity). Negatively regulates Rho activity by interacting with AKAP13/LBC. Acts as a transcriptional activator of the MYC gene; binds DNA non-specifically. Binds to both single-stranded guanine- and cytosine-rich strands within the nuclease hypersensitive element (NHE) III(1) region of the MYC gene promoter. Does not bind to duplex NHE III(1). Has G-quadruplex (G4) DNA-binding activity, which is independent of its nucleotide-binding and kinase activity. Binds both folded and unfolded G4 with similar low nanomolar affinities. Stabilizes folded G4s regardless of whether they are prefolded or not. Exhibits histidine protein kinase activity (By similarity).</text>
</comment>
<comment type="catalytic activity">
    <reaction evidence="1">
        <text>a 2'-deoxyribonucleoside 5'-diphosphate + ATP = a 2'-deoxyribonucleoside 5'-triphosphate + ADP</text>
        <dbReference type="Rhea" id="RHEA:44640"/>
        <dbReference type="ChEBI" id="CHEBI:30616"/>
        <dbReference type="ChEBI" id="CHEBI:61560"/>
        <dbReference type="ChEBI" id="CHEBI:73316"/>
        <dbReference type="ChEBI" id="CHEBI:456216"/>
        <dbReference type="EC" id="2.7.4.6"/>
    </reaction>
</comment>
<comment type="catalytic activity">
    <reaction evidence="1">
        <text>a ribonucleoside 5'-diphosphate + ATP = a ribonucleoside 5'-triphosphate + ADP</text>
        <dbReference type="Rhea" id="RHEA:18113"/>
        <dbReference type="ChEBI" id="CHEBI:30616"/>
        <dbReference type="ChEBI" id="CHEBI:57930"/>
        <dbReference type="ChEBI" id="CHEBI:61557"/>
        <dbReference type="ChEBI" id="CHEBI:456216"/>
        <dbReference type="EC" id="2.7.4.6"/>
    </reaction>
</comment>
<comment type="catalytic activity">
    <reaction evidence="1">
        <text>ATP + protein L-histidine = ADP + protein N-phospho-L-histidine.</text>
        <dbReference type="EC" id="2.7.13.3"/>
    </reaction>
</comment>
<comment type="cofactor">
    <cofactor evidence="1">
        <name>Mg(2+)</name>
        <dbReference type="ChEBI" id="CHEBI:18420"/>
    </cofactor>
</comment>
<comment type="subunit">
    <text evidence="1 3">Hexamer of two different chains: A and B (A6, A5B, A4B2, A3B3, A2B4, AB5, B6) (By similarity). Interacts with CAPN8 (By similarity). Interacts with AKAP13 (By similarity). Interacts with ITGB1BP1 (via C-terminal domain region) (By similarity). Interacts with BCL2L10 (By similarity).</text>
</comment>
<comment type="subcellular location">
    <subcellularLocation>
        <location evidence="1">Cytoplasm</location>
    </subcellularLocation>
    <subcellularLocation>
        <location evidence="1">Cell projection</location>
        <location evidence="1">Lamellipodium</location>
    </subcellularLocation>
    <subcellularLocation>
        <location evidence="1">Cell projection</location>
        <location evidence="1">Ruffle</location>
    </subcellularLocation>
    <subcellularLocation>
        <location evidence="1">Nucleus</location>
    </subcellularLocation>
    <text evidence="1">Colocalizes with ITGB1 and ITGB1BP1 at the edge or peripheral ruffles and lamellipodia during the early stages of cell spreading on fibronectin or collagen but not on vitronectin or laminin substrates.</text>
</comment>
<comment type="similarity">
    <text evidence="4">Belongs to the NDK family.</text>
</comment>
<name>NDKB_PONAB</name>
<accession>Q5RFH3</accession>